<gene>
    <name evidence="24" type="primary">KIF5A</name>
    <name type="synonym">NKHC1</name>
</gene>
<dbReference type="EC" id="5.6.1.3" evidence="23"/>
<dbReference type="EMBL" id="U06698">
    <property type="protein sequence ID" value="AAA20231.1"/>
    <property type="molecule type" value="mRNA"/>
</dbReference>
<dbReference type="EMBL" id="AB210045">
    <property type="protein sequence ID" value="BAE06127.1"/>
    <property type="status" value="ALT_INIT"/>
    <property type="molecule type" value="mRNA"/>
</dbReference>
<dbReference type="EMBL" id="CH471054">
    <property type="protein sequence ID" value="EAW97030.1"/>
    <property type="molecule type" value="Genomic_DNA"/>
</dbReference>
<dbReference type="EMBL" id="BC146670">
    <property type="protein sequence ID" value="AAI46671.1"/>
    <property type="molecule type" value="mRNA"/>
</dbReference>
<dbReference type="EMBL" id="BC150208">
    <property type="protein sequence ID" value="AAI50209.1"/>
    <property type="molecule type" value="mRNA"/>
</dbReference>
<dbReference type="CCDS" id="CCDS8945.1"/>
<dbReference type="PIR" id="I38510">
    <property type="entry name" value="I38510"/>
</dbReference>
<dbReference type="RefSeq" id="NP_004975.2">
    <property type="nucleotide sequence ID" value="NM_004984.2"/>
</dbReference>
<dbReference type="PDB" id="4UXT">
    <property type="method" value="EM"/>
    <property type="resolution" value="7.40 A"/>
    <property type="chains" value="C=1-340"/>
</dbReference>
<dbReference type="PDB" id="4UXY">
    <property type="method" value="EM"/>
    <property type="resolution" value="6.50 A"/>
    <property type="chains" value="C=1-340"/>
</dbReference>
<dbReference type="PDB" id="4UY0">
    <property type="method" value="EM"/>
    <property type="resolution" value="7.70 A"/>
    <property type="chains" value="C=1-340"/>
</dbReference>
<dbReference type="PDBsum" id="4UXT"/>
<dbReference type="PDBsum" id="4UXY"/>
<dbReference type="PDBsum" id="4UY0"/>
<dbReference type="SMR" id="Q12840"/>
<dbReference type="BioGRID" id="109999">
    <property type="interactions" value="91"/>
</dbReference>
<dbReference type="CORUM" id="Q12840"/>
<dbReference type="DIP" id="DIP-37584N"/>
<dbReference type="FunCoup" id="Q12840">
    <property type="interactions" value="1184"/>
</dbReference>
<dbReference type="IntAct" id="Q12840">
    <property type="interactions" value="72"/>
</dbReference>
<dbReference type="MINT" id="Q12840"/>
<dbReference type="STRING" id="9606.ENSP00000408979"/>
<dbReference type="BindingDB" id="Q12840"/>
<dbReference type="ChEMBL" id="CHEMBL5295"/>
<dbReference type="GlyGen" id="Q12840">
    <property type="glycosylation" value="1 site"/>
</dbReference>
<dbReference type="iPTMnet" id="Q12840"/>
<dbReference type="PhosphoSitePlus" id="Q12840"/>
<dbReference type="SwissPalm" id="Q12840"/>
<dbReference type="BioMuta" id="KIF5A"/>
<dbReference type="DMDM" id="143811412"/>
<dbReference type="jPOST" id="Q12840"/>
<dbReference type="MassIVE" id="Q12840"/>
<dbReference type="PaxDb" id="9606-ENSP00000408979"/>
<dbReference type="PeptideAtlas" id="Q12840"/>
<dbReference type="ProteomicsDB" id="58979"/>
<dbReference type="Pumba" id="Q12840"/>
<dbReference type="Antibodypedia" id="1390">
    <property type="antibodies" value="264 antibodies from 37 providers"/>
</dbReference>
<dbReference type="DNASU" id="3798"/>
<dbReference type="Ensembl" id="ENST00000455537.7">
    <property type="protein sequence ID" value="ENSP00000408979.2"/>
    <property type="gene ID" value="ENSG00000155980.13"/>
</dbReference>
<dbReference type="GeneID" id="3798"/>
<dbReference type="KEGG" id="hsa:3798"/>
<dbReference type="MANE-Select" id="ENST00000455537.7">
    <property type="protein sequence ID" value="ENSP00000408979.2"/>
    <property type="RefSeq nucleotide sequence ID" value="NM_004984.4"/>
    <property type="RefSeq protein sequence ID" value="NP_004975.2"/>
</dbReference>
<dbReference type="UCSC" id="uc001sor.2">
    <property type="organism name" value="human"/>
</dbReference>
<dbReference type="AGR" id="HGNC:6323"/>
<dbReference type="CTD" id="3798"/>
<dbReference type="DisGeNET" id="3798"/>
<dbReference type="GeneCards" id="KIF5A"/>
<dbReference type="GeneReviews" id="KIF5A"/>
<dbReference type="HGNC" id="HGNC:6323">
    <property type="gene designation" value="KIF5A"/>
</dbReference>
<dbReference type="HPA" id="ENSG00000155980">
    <property type="expression patterns" value="Tissue enriched (brain)"/>
</dbReference>
<dbReference type="MalaCards" id="KIF5A"/>
<dbReference type="MIM" id="602821">
    <property type="type" value="gene"/>
</dbReference>
<dbReference type="MIM" id="604187">
    <property type="type" value="phenotype"/>
</dbReference>
<dbReference type="MIM" id="617235">
    <property type="type" value="phenotype"/>
</dbReference>
<dbReference type="MIM" id="617921">
    <property type="type" value="phenotype"/>
</dbReference>
<dbReference type="neXtProt" id="NX_Q12840"/>
<dbReference type="OpenTargets" id="ENSG00000155980"/>
<dbReference type="Orphanet" id="324611">
    <property type="disease" value="Autosomal dominant Charcot-Marie-Tooth disease type 2 due to KIF5A mutation"/>
</dbReference>
<dbReference type="Orphanet" id="100991">
    <property type="disease" value="Autosomal dominant spastic paraplegia type 10"/>
</dbReference>
<dbReference type="PharmGKB" id="PA30107"/>
<dbReference type="VEuPathDB" id="HostDB:ENSG00000155980"/>
<dbReference type="eggNOG" id="KOG0240">
    <property type="taxonomic scope" value="Eukaryota"/>
</dbReference>
<dbReference type="GeneTree" id="ENSGT00940000159439"/>
<dbReference type="HOGENOM" id="CLU_001485_11_1_1"/>
<dbReference type="InParanoid" id="Q12840"/>
<dbReference type="OrthoDB" id="3176171at2759"/>
<dbReference type="PAN-GO" id="Q12840">
    <property type="GO annotations" value="8 GO annotations based on evolutionary models"/>
</dbReference>
<dbReference type="PhylomeDB" id="Q12840"/>
<dbReference type="TreeFam" id="TF105225"/>
<dbReference type="PathwayCommons" id="Q12840"/>
<dbReference type="Reactome" id="R-HSA-2132295">
    <property type="pathway name" value="MHC class II antigen presentation"/>
</dbReference>
<dbReference type="Reactome" id="R-HSA-264876">
    <property type="pathway name" value="Insulin processing"/>
</dbReference>
<dbReference type="Reactome" id="R-HSA-5625970">
    <property type="pathway name" value="RHO GTPases activate KTN1"/>
</dbReference>
<dbReference type="Reactome" id="R-HSA-6811434">
    <property type="pathway name" value="COPI-dependent Golgi-to-ER retrograde traffic"/>
</dbReference>
<dbReference type="Reactome" id="R-HSA-983189">
    <property type="pathway name" value="Kinesins"/>
</dbReference>
<dbReference type="SignaLink" id="Q12840"/>
<dbReference type="SIGNOR" id="Q12840"/>
<dbReference type="BioGRID-ORCS" id="3798">
    <property type="hits" value="22 hits in 1152 CRISPR screens"/>
</dbReference>
<dbReference type="CD-CODE" id="91857CE7">
    <property type="entry name" value="Nucleolus"/>
</dbReference>
<dbReference type="CD-CODE" id="FB4E32DD">
    <property type="entry name" value="Presynaptic clusters and postsynaptic densities"/>
</dbReference>
<dbReference type="ChiTaRS" id="KIF5A">
    <property type="organism name" value="human"/>
</dbReference>
<dbReference type="EvolutionaryTrace" id="Q12840"/>
<dbReference type="GeneWiki" id="KIF5A"/>
<dbReference type="GenomeRNAi" id="3798"/>
<dbReference type="Pharos" id="Q12840">
    <property type="development level" value="Tbio"/>
</dbReference>
<dbReference type="PRO" id="PR:Q12840"/>
<dbReference type="Proteomes" id="UP000005640">
    <property type="component" value="Chromosome 12"/>
</dbReference>
<dbReference type="RNAct" id="Q12840">
    <property type="molecule type" value="protein"/>
</dbReference>
<dbReference type="Bgee" id="ENSG00000155980">
    <property type="expression patterns" value="Expressed in right frontal lobe and 130 other cell types or tissues"/>
</dbReference>
<dbReference type="ExpressionAtlas" id="Q12840">
    <property type="expression patterns" value="baseline and differential"/>
</dbReference>
<dbReference type="GO" id="GO:1904115">
    <property type="term" value="C:axon cytoplasm"/>
    <property type="evidence" value="ECO:0007669"/>
    <property type="project" value="GOC"/>
</dbReference>
<dbReference type="GO" id="GO:0035253">
    <property type="term" value="C:ciliary rootlet"/>
    <property type="evidence" value="ECO:0007669"/>
    <property type="project" value="Ensembl"/>
</dbReference>
<dbReference type="GO" id="GO:0005737">
    <property type="term" value="C:cytoplasm"/>
    <property type="evidence" value="ECO:0000318"/>
    <property type="project" value="GO_Central"/>
</dbReference>
<dbReference type="GO" id="GO:0005829">
    <property type="term" value="C:cytosol"/>
    <property type="evidence" value="ECO:0000304"/>
    <property type="project" value="Reactome"/>
</dbReference>
<dbReference type="GO" id="GO:0032839">
    <property type="term" value="C:dendrite cytoplasm"/>
    <property type="evidence" value="ECO:0007669"/>
    <property type="project" value="GOC"/>
</dbReference>
<dbReference type="GO" id="GO:0005871">
    <property type="term" value="C:kinesin complex"/>
    <property type="evidence" value="ECO:0000318"/>
    <property type="project" value="GO_Central"/>
</dbReference>
<dbReference type="GO" id="GO:0016020">
    <property type="term" value="C:membrane"/>
    <property type="evidence" value="ECO:0007005"/>
    <property type="project" value="UniProtKB"/>
</dbReference>
<dbReference type="GO" id="GO:0005874">
    <property type="term" value="C:microtubule"/>
    <property type="evidence" value="ECO:0000318"/>
    <property type="project" value="GO_Central"/>
</dbReference>
<dbReference type="GO" id="GO:0043204">
    <property type="term" value="C:perikaryon"/>
    <property type="evidence" value="ECO:0007669"/>
    <property type="project" value="UniProtKB-SubCell"/>
</dbReference>
<dbReference type="GO" id="GO:0048471">
    <property type="term" value="C:perinuclear region of cytoplasm"/>
    <property type="evidence" value="ECO:0007669"/>
    <property type="project" value="UniProtKB-SubCell"/>
</dbReference>
<dbReference type="GO" id="GO:0099524">
    <property type="term" value="C:postsynaptic cytosol"/>
    <property type="evidence" value="ECO:0007669"/>
    <property type="project" value="Ensembl"/>
</dbReference>
<dbReference type="GO" id="GO:0005524">
    <property type="term" value="F:ATP binding"/>
    <property type="evidence" value="ECO:0007669"/>
    <property type="project" value="UniProtKB-KW"/>
</dbReference>
<dbReference type="GO" id="GO:0016887">
    <property type="term" value="F:ATP hydrolysis activity"/>
    <property type="evidence" value="ECO:0000318"/>
    <property type="project" value="GO_Central"/>
</dbReference>
<dbReference type="GO" id="GO:0003774">
    <property type="term" value="F:cytoskeletal motor activity"/>
    <property type="evidence" value="ECO:0000304"/>
    <property type="project" value="ProtInc"/>
</dbReference>
<dbReference type="GO" id="GO:0019894">
    <property type="term" value="F:kinesin binding"/>
    <property type="evidence" value="ECO:0007669"/>
    <property type="project" value="Ensembl"/>
</dbReference>
<dbReference type="GO" id="GO:0008017">
    <property type="term" value="F:microtubule binding"/>
    <property type="evidence" value="ECO:0000318"/>
    <property type="project" value="GO_Central"/>
</dbReference>
<dbReference type="GO" id="GO:0003777">
    <property type="term" value="F:microtubule motor activity"/>
    <property type="evidence" value="ECO:0000314"/>
    <property type="project" value="UniProtKB"/>
</dbReference>
<dbReference type="GO" id="GO:0008574">
    <property type="term" value="F:plus-end-directed microtubule motor activity"/>
    <property type="evidence" value="ECO:0000318"/>
    <property type="project" value="GO_Central"/>
</dbReference>
<dbReference type="GO" id="GO:0099641">
    <property type="term" value="P:anterograde axonal protein transport"/>
    <property type="evidence" value="ECO:0000250"/>
    <property type="project" value="UniProtKB"/>
</dbReference>
<dbReference type="GO" id="GO:0098971">
    <property type="term" value="P:anterograde dendritic transport of neurotransmitter receptor complex"/>
    <property type="evidence" value="ECO:0000318"/>
    <property type="project" value="GO_Central"/>
</dbReference>
<dbReference type="GO" id="GO:0007411">
    <property type="term" value="P:axon guidance"/>
    <property type="evidence" value="ECO:0000318"/>
    <property type="project" value="GO_Central"/>
</dbReference>
<dbReference type="GO" id="GO:0007268">
    <property type="term" value="P:chemical synaptic transmission"/>
    <property type="evidence" value="ECO:0000304"/>
    <property type="project" value="ProtInc"/>
</dbReference>
<dbReference type="GO" id="GO:0007018">
    <property type="term" value="P:microtubule-based movement"/>
    <property type="evidence" value="ECO:0000304"/>
    <property type="project" value="ProtInc"/>
</dbReference>
<dbReference type="GO" id="GO:1990049">
    <property type="term" value="P:retrograde neuronal dense core vesicle transport"/>
    <property type="evidence" value="ECO:0000250"/>
    <property type="project" value="ARUK-UCL"/>
</dbReference>
<dbReference type="GO" id="GO:0048489">
    <property type="term" value="P:synaptic vesicle transport"/>
    <property type="evidence" value="ECO:0000318"/>
    <property type="project" value="GO_Central"/>
</dbReference>
<dbReference type="GO" id="GO:0016192">
    <property type="term" value="P:vesicle-mediated transport"/>
    <property type="evidence" value="ECO:0000250"/>
    <property type="project" value="UniProtKB"/>
</dbReference>
<dbReference type="CDD" id="cd23649">
    <property type="entry name" value="Khc_CBD_cc"/>
    <property type="match status" value="1"/>
</dbReference>
<dbReference type="CDD" id="cd01369">
    <property type="entry name" value="KISc_KHC_KIF5"/>
    <property type="match status" value="1"/>
</dbReference>
<dbReference type="FunFam" id="3.40.850.10:FF:000009">
    <property type="entry name" value="Kinesin-like protein"/>
    <property type="match status" value="1"/>
</dbReference>
<dbReference type="Gene3D" id="6.10.250.1590">
    <property type="match status" value="1"/>
</dbReference>
<dbReference type="Gene3D" id="3.40.850.10">
    <property type="entry name" value="Kinesin motor domain"/>
    <property type="match status" value="1"/>
</dbReference>
<dbReference type="InterPro" id="IPR027640">
    <property type="entry name" value="Kinesin-like_fam"/>
</dbReference>
<dbReference type="InterPro" id="IPR019821">
    <property type="entry name" value="Kinesin_motor_CS"/>
</dbReference>
<dbReference type="InterPro" id="IPR001752">
    <property type="entry name" value="Kinesin_motor_dom"/>
</dbReference>
<dbReference type="InterPro" id="IPR036961">
    <property type="entry name" value="Kinesin_motor_dom_sf"/>
</dbReference>
<dbReference type="InterPro" id="IPR027417">
    <property type="entry name" value="P-loop_NTPase"/>
</dbReference>
<dbReference type="PANTHER" id="PTHR47968">
    <property type="entry name" value="CENTROMERE PROTEIN E"/>
    <property type="match status" value="1"/>
</dbReference>
<dbReference type="PANTHER" id="PTHR47968:SF62">
    <property type="entry name" value="KINESIN FAMILY MEMBER 5A"/>
    <property type="match status" value="1"/>
</dbReference>
<dbReference type="Pfam" id="PF00225">
    <property type="entry name" value="Kinesin"/>
    <property type="match status" value="1"/>
</dbReference>
<dbReference type="PRINTS" id="PR00380">
    <property type="entry name" value="KINESINHEAVY"/>
</dbReference>
<dbReference type="SMART" id="SM00129">
    <property type="entry name" value="KISc"/>
    <property type="match status" value="1"/>
</dbReference>
<dbReference type="SUPFAM" id="SSF52540">
    <property type="entry name" value="P-loop containing nucleoside triphosphate hydrolases"/>
    <property type="match status" value="1"/>
</dbReference>
<dbReference type="PROSITE" id="PS00411">
    <property type="entry name" value="KINESIN_MOTOR_1"/>
    <property type="match status" value="1"/>
</dbReference>
<dbReference type="PROSITE" id="PS50067">
    <property type="entry name" value="KINESIN_MOTOR_2"/>
    <property type="match status" value="1"/>
</dbReference>
<keyword id="KW-0002">3D-structure</keyword>
<keyword id="KW-0007">Acetylation</keyword>
<keyword id="KW-0036">Amyotrophic lateral sclerosis</keyword>
<keyword id="KW-0067">ATP-binding</keyword>
<keyword id="KW-0175">Coiled coil</keyword>
<keyword id="KW-0963">Cytoplasm</keyword>
<keyword id="KW-0206">Cytoskeleton</keyword>
<keyword id="KW-0225">Disease variant</keyword>
<keyword id="KW-0887">Epilepsy</keyword>
<keyword id="KW-0890">Hereditary spastic paraplegia</keyword>
<keyword id="KW-0378">Hydrolase</keyword>
<keyword id="KW-0413">Isomerase</keyword>
<keyword id="KW-0493">Microtubule</keyword>
<keyword id="KW-0505">Motor protein</keyword>
<keyword id="KW-0523">Neurodegeneration</keyword>
<keyword id="KW-0547">Nucleotide-binding</keyword>
<keyword id="KW-0597">Phosphoprotein</keyword>
<keyword id="KW-1267">Proteomics identification</keyword>
<keyword id="KW-1185">Reference proteome</keyword>
<feature type="initiator methionine" description="Removed" evidence="25">
    <location>
        <position position="1"/>
    </location>
</feature>
<feature type="chain" id="PRO_0000125353" description="Kinesin heavy chain isoform 5A">
    <location>
        <begin position="2"/>
        <end position="1032"/>
    </location>
</feature>
<feature type="domain" description="Kinesin motor" evidence="3">
    <location>
        <begin position="9"/>
        <end position="327"/>
    </location>
</feature>
<feature type="region of interest" description="Microtubule-binding">
    <location>
        <begin position="174"/>
        <end position="315"/>
    </location>
</feature>
<feature type="region of interest" description="Necessary for interaction with ZFYVE27" evidence="1">
    <location>
        <begin position="271"/>
        <end position="361"/>
    </location>
</feature>
<feature type="region of interest" description="Interaction with BICD2" evidence="12">
    <location>
        <begin position="353"/>
        <end position="1032"/>
    </location>
</feature>
<feature type="region of interest" description="Disordered" evidence="4">
    <location>
        <begin position="906"/>
        <end position="939"/>
    </location>
</feature>
<feature type="region of interest" description="Globular">
    <location>
        <begin position="907"/>
        <end position="1032"/>
    </location>
</feature>
<feature type="region of interest" description="Disordered" evidence="4">
    <location>
        <begin position="978"/>
        <end position="1010"/>
    </location>
</feature>
<feature type="coiled-coil region">
    <location>
        <begin position="331"/>
        <end position="906"/>
    </location>
</feature>
<feature type="compositionally biased region" description="Low complexity" evidence="4">
    <location>
        <begin position="978"/>
        <end position="989"/>
    </location>
</feature>
<feature type="compositionally biased region" description="Polar residues" evidence="4">
    <location>
        <begin position="991"/>
        <end position="1003"/>
    </location>
</feature>
<feature type="binding site" evidence="3">
    <location>
        <begin position="86"/>
        <end position="93"/>
    </location>
    <ligand>
        <name>ATP</name>
        <dbReference type="ChEBI" id="CHEBI:30616"/>
    </ligand>
</feature>
<feature type="modified residue" description="N-acetylalanine" evidence="25">
    <location>
        <position position="2"/>
    </location>
</feature>
<feature type="modified residue" description="Phosphothreonine" evidence="1">
    <location>
        <position position="397"/>
    </location>
</feature>
<feature type="sequence variant" id="VAR_058741" description="In SPG10; complicated form." evidence="11">
    <original>Y</original>
    <variation>C</variation>
    <location>
        <position position="63"/>
    </location>
</feature>
<feature type="sequence variant" id="VAR_058742" description="In SPG10; complicated form." evidence="11">
    <original>M</original>
    <variation>T</variation>
    <location>
        <position position="198"/>
    </location>
</feature>
<feature type="sequence variant" id="VAR_066616" description="In SPG10." evidence="13">
    <original>S</original>
    <variation>C</variation>
    <location>
        <position position="203"/>
    </location>
</feature>
<feature type="sequence variant" id="VAR_058743" description="In SPG10; complicated form; dbSNP:rs387907287." evidence="11">
    <original>R</original>
    <variation>Q</variation>
    <location>
        <position position="204"/>
    </location>
</feature>
<feature type="sequence variant" id="VAR_058744" description="In SPG10; complicated form; dbSNP:rs387907285." evidence="11">
    <original>E</original>
    <variation>K</variation>
    <location>
        <position position="251"/>
    </location>
</feature>
<feature type="sequence variant" id="VAR_046744" description="In SPG10; decreases microtubule affinity; reduces gliding velocity." evidence="9 10">
    <original>K</original>
    <variation>N</variation>
    <location>
        <position position="253"/>
    </location>
</feature>
<feature type="sequence variant" id="VAR_032842" description="In SPG10; reduces gliding velocity; reduces microtubule-dependent ATPase activity; dbSNP:rs121434441." evidence="5 9">
    <original>N</original>
    <variation>S</variation>
    <location>
        <position position="256"/>
    </location>
</feature>
<feature type="sequence variant" id="VAR_058745" description="In SPG10." evidence="10">
    <location>
        <position position="256"/>
    </location>
</feature>
<feature type="sequence variant" id="VAR_058746" description="In SPG10; complicated form." evidence="11">
    <original>K</original>
    <variation>N</variation>
    <location>
        <position position="257"/>
    </location>
</feature>
<feature type="sequence variant" id="VAR_033108" description="In SPG10; dbSNP:rs121434443." evidence="8">
    <original>Y</original>
    <variation>C</variation>
    <location>
        <position position="276"/>
    </location>
</feature>
<feature type="sequence variant" id="VAR_032843" description="In SPG10; dbSNP:rs121434442." evidence="6 11">
    <original>R</original>
    <variation>C</variation>
    <location>
        <position position="280"/>
    </location>
</feature>
<feature type="sequence variant" id="VAR_058747" description="In SPG10; complicated form; dbSNP:rs387907288." evidence="11">
    <original>R</original>
    <variation>H</variation>
    <location>
        <position position="280"/>
    </location>
</feature>
<feature type="sequence variant" id="VAR_058748" description="In SPG10; pure form." evidence="11">
    <original>R</original>
    <variation>L</variation>
    <location>
        <position position="280"/>
    </location>
</feature>
<feature type="sequence variant" id="VAR_032844" description="In SPG10; does not affect microtubule affinity; does not affect gliding velocity; does not affect microtubule-dependent ATPase activity; dbSNP:rs121434444." evidence="7 9">
    <original>A</original>
    <variation>V</variation>
    <location>
        <position position="361"/>
    </location>
</feature>
<feature type="sequence variant" id="VAR_080647" description="In ALS25; uncertain significance; dbSNP:rs1399145820." evidence="18">
    <original>E</original>
    <variation>G</variation>
    <location>
        <position position="413"/>
    </location>
</feature>
<feature type="sequence variant" id="VAR_080648" description="In ALS25; uncertain significance; dbSNP:rs1373971092." evidence="18">
    <original>Q</original>
    <variation>H</variation>
    <location>
        <position position="474"/>
    </location>
</feature>
<feature type="sequence variant" id="VAR_080649" description="In ALS25." evidence="19">
    <location>
        <begin position="544"/>
        <end position="1032"/>
    </location>
</feature>
<feature type="sequence variant" id="VAR_080650" description="In ALS25; uncertain significance; dbSNP:rs754373609." evidence="18">
    <original>S</original>
    <variation>G</variation>
    <location>
        <position position="577"/>
    </location>
</feature>
<feature type="sequence variant" id="VAR_080651" description="In ALS25; uncertain significance; dbSNP:rs113247976." evidence="18 19">
    <original>P</original>
    <variation>L</variation>
    <location>
        <position position="986"/>
    </location>
</feature>
<feature type="sequence variant" id="VAR_080652" description="In ALS25; dbSNP:rs1555179087." evidence="18 19">
    <original>R</original>
    <variation>G</variation>
    <location>
        <position position="1007"/>
    </location>
</feature>
<feature type="mutagenesis site" description="Strongly reduces microtubule affinity; slightly reduces gliding velocity." evidence="9">
    <original>R</original>
    <variation>S</variation>
    <location>
        <position position="280"/>
    </location>
</feature>
<feature type="sequence conflict" description="In Ref. 2; BAE06127." evidence="22" ref="2">
    <original>A</original>
    <variation>V</variation>
    <location>
        <position position="490"/>
    </location>
</feature>
<feature type="sequence conflict" description="In Ref. 1; AAA20231." evidence="22" ref="1">
    <original>G</original>
    <variation>A</variation>
    <location>
        <position position="913"/>
    </location>
</feature>
<reference key="1">
    <citation type="journal article" date="1994" name="Neuron">
        <title>Cloning and localization of a conventional kinesin motor expressed exclusively in neurons.</title>
        <authorList>
            <person name="Niclas J."/>
            <person name="Navone F."/>
            <person name="Hom-Booher N."/>
            <person name="Vale R.D."/>
        </authorList>
    </citation>
    <scope>NUCLEOTIDE SEQUENCE [MRNA]</scope>
    <scope>TISSUE SPECIFICITY</scope>
    <source>
        <tissue>Hippocampus</tissue>
    </source>
</reference>
<reference key="2">
    <citation type="submission" date="2005-03" db="EMBL/GenBank/DDBJ databases">
        <title>Preparation of a set of expression-ready clones of mammalian long cDNAs encoding large proteins by the ORF trap cloning method.</title>
        <authorList>
            <person name="Nakajima D."/>
            <person name="Saito K."/>
            <person name="Yamakawa H."/>
            <person name="Kikuno R.F."/>
            <person name="Nakayama M."/>
            <person name="Ohara R."/>
            <person name="Okazaki N."/>
            <person name="Koga H."/>
            <person name="Nagase T."/>
            <person name="Ohara O."/>
        </authorList>
    </citation>
    <scope>NUCLEOTIDE SEQUENCE [LARGE SCALE MRNA]</scope>
    <source>
        <tissue>Brain</tissue>
    </source>
</reference>
<reference key="3">
    <citation type="submission" date="2005-07" db="EMBL/GenBank/DDBJ databases">
        <authorList>
            <person name="Mural R.J."/>
            <person name="Istrail S."/>
            <person name="Sutton G.G."/>
            <person name="Florea L."/>
            <person name="Halpern A.L."/>
            <person name="Mobarry C.M."/>
            <person name="Lippert R."/>
            <person name="Walenz B."/>
            <person name="Shatkay H."/>
            <person name="Dew I."/>
            <person name="Miller J.R."/>
            <person name="Flanigan M.J."/>
            <person name="Edwards N.J."/>
            <person name="Bolanos R."/>
            <person name="Fasulo D."/>
            <person name="Halldorsson B.V."/>
            <person name="Hannenhalli S."/>
            <person name="Turner R."/>
            <person name="Yooseph S."/>
            <person name="Lu F."/>
            <person name="Nusskern D.R."/>
            <person name="Shue B.C."/>
            <person name="Zheng X.H."/>
            <person name="Zhong F."/>
            <person name="Delcher A.L."/>
            <person name="Huson D.H."/>
            <person name="Kravitz S.A."/>
            <person name="Mouchard L."/>
            <person name="Reinert K."/>
            <person name="Remington K.A."/>
            <person name="Clark A.G."/>
            <person name="Waterman M.S."/>
            <person name="Eichler E.E."/>
            <person name="Adams M.D."/>
            <person name="Hunkapiller M.W."/>
            <person name="Myers E.W."/>
            <person name="Venter J.C."/>
        </authorList>
    </citation>
    <scope>NUCLEOTIDE SEQUENCE [LARGE SCALE GENOMIC DNA]</scope>
</reference>
<reference key="4">
    <citation type="journal article" date="2004" name="Genome Res.">
        <title>The status, quality, and expansion of the NIH full-length cDNA project: the Mammalian Gene Collection (MGC).</title>
        <authorList>
            <consortium name="The MGC Project Team"/>
        </authorList>
    </citation>
    <scope>NUCLEOTIDE SEQUENCE [LARGE SCALE MRNA]</scope>
</reference>
<reference key="5">
    <citation type="journal article" date="2009" name="Anal. Chem.">
        <title>Lys-N and trypsin cover complementary parts of the phosphoproteome in a refined SCX-based approach.</title>
        <authorList>
            <person name="Gauci S."/>
            <person name="Helbig A.O."/>
            <person name="Slijper M."/>
            <person name="Krijgsveld J."/>
            <person name="Heck A.J."/>
            <person name="Mohammed S."/>
        </authorList>
    </citation>
    <scope>ACETYLATION [LARGE SCALE ANALYSIS] AT ALA-2</scope>
    <scope>CLEAVAGE OF INITIATOR METHIONINE [LARGE SCALE ANALYSIS]</scope>
    <scope>IDENTIFICATION BY MASS SPECTROMETRY [LARGE SCALE ANALYSIS]</scope>
</reference>
<reference key="6">
    <citation type="journal article" date="2010" name="PLoS Biol.">
        <title>Bicaudal D2, dynein, and kinesin-1 associate with nuclear pore complexes and regulate centrosome and nuclear positioning during mitotic entry.</title>
        <authorList>
            <person name="Splinter D."/>
            <person name="Tanenbaum M.E."/>
            <person name="Lindqvist A."/>
            <person name="Jaarsma D."/>
            <person name="Flotho A."/>
            <person name="Yu K.L."/>
            <person name="Grigoriev I."/>
            <person name="Engelsma D."/>
            <person name="Haasdijk E.D."/>
            <person name="Keijzer N."/>
            <person name="Demmers J."/>
            <person name="Fornerod M."/>
            <person name="Melchior F."/>
            <person name="Hoogenraad C.C."/>
            <person name="Medema R.H."/>
            <person name="Akhmanova A."/>
        </authorList>
    </citation>
    <scope>INTERACTION WITH BICD2</scope>
</reference>
<reference key="7">
    <citation type="journal article" date="2011" name="BMC Syst. Biol.">
        <title>Initial characterization of the human central proteome.</title>
        <authorList>
            <person name="Burkard T.R."/>
            <person name="Planyavsky M."/>
            <person name="Kaupe I."/>
            <person name="Breitwieser F.P."/>
            <person name="Buerckstuemmer T."/>
            <person name="Bennett K.L."/>
            <person name="Superti-Furga G."/>
            <person name="Colinge J."/>
        </authorList>
    </citation>
    <scope>IDENTIFICATION BY MASS SPECTROMETRY [LARGE SCALE ANALYSIS]</scope>
</reference>
<reference key="8">
    <citation type="journal article" date="2015" name="Dev. Cell">
        <title>BORC, a multisubunit complex that regulates lysosome positioning.</title>
        <authorList>
            <person name="Pu J."/>
            <person name="Schindler C."/>
            <person name="Jia R."/>
            <person name="Jarnik M."/>
            <person name="Backlund P."/>
            <person name="Bonifacino J.S."/>
        </authorList>
    </citation>
    <scope>INTERACTION WITH BORCS5</scope>
</reference>
<reference key="9">
    <citation type="journal article" date="2002" name="Am. J. Hum. Genet.">
        <title>A kinesin heavy chain (KIF5A) mutation in hereditary spastic paraplegia (SPG10).</title>
        <authorList>
            <person name="Reid E."/>
            <person name="Kloos M."/>
            <person name="Ashley-Koch A."/>
            <person name="Hughes L."/>
            <person name="Bevan S."/>
            <person name="Svenson I.K."/>
            <person name="Graham F.L."/>
            <person name="Gaskell P.C."/>
            <person name="Dearlove A."/>
            <person name="Pericak-Vance M.A."/>
            <person name="Rubinsztein D.C."/>
            <person name="Marchuk D.A."/>
        </authorList>
    </citation>
    <scope>VARIANT SPG10 SER-256</scope>
</reference>
<reference key="10">
    <citation type="journal article" date="2004" name="Neurology">
        <title>Evidence of kinesin heavy chain (KIF5A) involvement in pure hereditary spastic paraplegia.</title>
        <authorList>
            <person name="Fichera M."/>
            <person name="Lo Giudice M."/>
            <person name="Falco M."/>
            <person name="Sturnio M."/>
            <person name="Amata S."/>
            <person name="Calabrese O."/>
            <person name="Bigoni S."/>
            <person name="Calzolari E."/>
            <person name="Neri M."/>
        </authorList>
    </citation>
    <scope>VARIANT SPG10 CYS-280</scope>
</reference>
<reference key="11">
    <citation type="journal article" date="2006" name="Arch. Neurol.">
        <title>A missense mutation in the coiled-coil domain of the KIF5A gene and late-onset hereditary spastic paraplegia.</title>
        <authorList>
            <person name="Lo Giudice M."/>
            <person name="Neri M."/>
            <person name="Falco M."/>
            <person name="Sturnio M."/>
            <person name="Calzolari E."/>
            <person name="Di Benedetto D."/>
            <person name="Fichera M."/>
        </authorList>
    </citation>
    <scope>VARIANT SPG10 VAL-361</scope>
</reference>
<reference key="12">
    <citation type="journal article" date="2006" name="Neurogenetics">
        <title>Mutation in KIF5A can also cause adult-onset hereditary spastic paraplegia.</title>
        <authorList>
            <person name="Blair M.A."/>
            <person name="Ma S."/>
            <person name="Hedera P."/>
        </authorList>
    </citation>
    <scope>VARIANT SPG10 CYS-276</scope>
</reference>
<reference key="13">
    <citation type="journal article" date="2008" name="Hum. Mol. Genet.">
        <title>Effect of spastic paraplegia mutations in KIF5A kinesin on transport activity.</title>
        <authorList>
            <person name="Ebbing B."/>
            <person name="Mann K."/>
            <person name="Starosta A."/>
            <person name="Jaud J."/>
            <person name="Schoels L."/>
            <person name="Schuele R."/>
            <person name="Woehlke G."/>
        </authorList>
    </citation>
    <scope>VARIANT ASN-253</scope>
    <scope>CHARACTERIZATION OF VARIANT ASN-253</scope>
    <scope>CHARACTERIZATION OF VARIANTS SPG10 SER-256 AND VAL-361</scope>
    <scope>MUTAGENESIS OF ARG-280</scope>
    <scope>CATALYTIC ACTIVITY</scope>
</reference>
<reference key="14">
    <citation type="journal article" date="2008" name="J. Neurol. Neurosurg. Psych.">
        <title>SPG10 is a rare cause of spastic paraplegia in European families.</title>
        <authorList>
            <person name="Schuele R."/>
            <person name="Kremer B.P.H."/>
            <person name="Kassubek J."/>
            <person name="Auer-Grumbach M."/>
            <person name="Kostic V."/>
            <person name="Klopstock T."/>
            <person name="Klimpe S."/>
            <person name="Otto S."/>
            <person name="Boesch S."/>
            <person name="van de Warrenburg B.P."/>
            <person name="Schoels L."/>
        </authorList>
    </citation>
    <scope>VARIANTS SPG10 ASN-253 AND ASN-256 DEL</scope>
</reference>
<reference key="15">
    <citation type="journal article" date="2009" name="Hum. Mutat.">
        <title>Complicated forms of autosomal dominant hereditary spastic paraplegia are frequent in SPG10.</title>
        <authorList>
            <person name="Goizet C."/>
            <person name="Boukhris A."/>
            <person name="Mundwiller E."/>
            <person name="Tallaksen C."/>
            <person name="Forlani S."/>
            <person name="Toutain A."/>
            <person name="Carriere N."/>
            <person name="Paquis V."/>
            <person name="Depienne C."/>
            <person name="Durr A."/>
            <person name="Stevanin G."/>
            <person name="Brice A."/>
        </authorList>
    </citation>
    <scope>VARIANTS SPG10 CYS-63; THR-198; GLN-204; LYS-251; ASN-257; CYS-280; LEU-280 AND HIS-280</scope>
</reference>
<reference key="16">
    <citation type="journal article" date="2011" name="Neurol. Sci.">
        <title>A novel mutation in KIF5A gene causing hereditary spastic paraplegia with axonal neuropathy.</title>
        <authorList>
            <person name="Musumeci O."/>
            <person name="Bassi M.T."/>
            <person name="Mazzeo A."/>
            <person name="Grandis M."/>
            <person name="Crimella C."/>
            <person name="Martinuzzi A."/>
            <person name="Toscano A."/>
        </authorList>
    </citation>
    <scope>VARIANT SPG10 CYS-203</scope>
</reference>
<reference key="17">
    <citation type="journal article" date="2013" name="BMC Med. Genet.">
        <title>Targeted exome sequencing for mitochondrial disorders reveals high genetic heterogeneity.</title>
        <authorList>
            <person name="DaRe J.T."/>
            <person name="Vasta V."/>
            <person name="Penn J."/>
            <person name="Tran N.T."/>
            <person name="Hahn S.H."/>
        </authorList>
    </citation>
    <scope>INVOLVEMENT IN NEIMY</scope>
</reference>
<reference key="18">
    <citation type="journal article" date="2016" name="Ann. Neurol.">
        <title>KIF5A mutations cause an infantile onset phenotype including severe myoclonus with evidence of mitochondrial dysfunction.</title>
        <authorList>
            <person name="Duis J."/>
            <person name="Dean S."/>
            <person name="Applegate C."/>
            <person name="Harper A."/>
            <person name="Xiao R."/>
            <person name="He W."/>
            <person name="Dollar J.D."/>
            <person name="Sun L.R."/>
            <person name="Waberski M.B."/>
            <person name="Crawford T.O."/>
            <person name="Hamosh A."/>
            <person name="Stafstrom C.E."/>
        </authorList>
    </citation>
    <scope>INVOLVEMENT IN NEIMY</scope>
</reference>
<reference key="19">
    <citation type="journal article" date="2017" name="Clin. Genet.">
        <title>KIF5A de novo mutation associated with myoclonic seizures and neonatal onset progressive leukoencephalopathy.</title>
        <authorList>
            <person name="Rydzanicz M."/>
            <person name="Jagla M."/>
            <person name="Kosinska J."/>
            <person name="Tomasik T."/>
            <person name="Sobczak A."/>
            <person name="Pollak A."/>
            <person name="Herman-Sucharska I."/>
            <person name="Walczak A."/>
            <person name="Kwinta P."/>
            <person name="Ploski R."/>
        </authorList>
    </citation>
    <scope>INVOLVEMENT IN NEIMY</scope>
</reference>
<reference key="20">
    <citation type="journal article" date="2018" name="Brain">
        <title>Hot-spot KIF5A mutations cause familial ALS.</title>
        <authorList>
            <person name="Brenner D."/>
            <person name="Yilmaz R."/>
            <person name="Mueller K."/>
            <person name="Grehl T."/>
            <person name="Petri S."/>
            <person name="Meyer T."/>
            <person name="Grosskreutz J."/>
            <person name="Weydt P."/>
            <person name="Ruf W."/>
            <person name="Neuwirth C."/>
            <person name="Weber M."/>
            <person name="Pinto S."/>
            <person name="Claeys K.G."/>
            <person name="Schrank B."/>
            <person name="Jordan B."/>
            <person name="Knehr A."/>
            <person name="Guenther K."/>
            <person name="Huebers A."/>
            <person name="Zeller D."/>
            <person name="Kubisch C."/>
            <person name="Jablonka S."/>
            <person name="Sendtner M."/>
            <person name="Klopstock T."/>
            <person name="de Carvalho M."/>
            <person name="Sperfeld A."/>
            <person name="Borck G."/>
            <person name="Volk A.E."/>
            <person name="Dorst J."/>
            <person name="Weis J."/>
            <person name="Otto M."/>
            <person name="Schuster J."/>
            <person name="Del Tredici K."/>
            <person name="Braak H."/>
            <person name="Danzer K.M."/>
            <person name="Freischmidt A."/>
            <person name="Meitinger T."/>
            <person name="Strom T.M."/>
            <person name="Ludolph A.C."/>
            <person name="Andersen P.M."/>
            <person name="Weishaupt J.H."/>
        </authorList>
    </citation>
    <scope>INVOLVEMENT IN ALS25</scope>
    <scope>VARIANTS ALS25 GLY-413; HIS-474; GLY-577; LEU-986 AND GLY-1007</scope>
</reference>
<reference key="21">
    <citation type="journal article" date="2018" name="Neuron">
        <title>Genome-wide Analyses Identify KIF5A as a Novel ALS Gene.</title>
        <authorList>
            <person name="Nicolas A."/>
            <person name="Kenna K.P."/>
            <person name="Renton A.E."/>
            <person name="Ticozzi N."/>
            <person name="Faghri F."/>
            <person name="Chia R."/>
            <person name="Dominov J.A."/>
            <person name="Kenna B.J."/>
            <person name="Nalls M.A."/>
            <person name="Keagle P."/>
            <person name="Rivera A.M."/>
            <person name="van Rheenen W."/>
            <person name="Murphy N.A."/>
            <person name="van Vugt J.J.F.A."/>
            <person name="Geiger J.T."/>
            <person name="Van der Spek R.A."/>
            <person name="Pliner H.A."/>
            <person name="Shankaracharya X."/>
            <person name="Smith B.N."/>
            <person name="Marangi G."/>
            <person name="Topp S.D."/>
            <person name="Abramzon Y."/>
            <person name="Gkazi A.S."/>
            <person name="Eicher J.D."/>
            <person name="Kenna A."/>
            <person name="Mora G."/>
            <person name="Calvo A."/>
            <person name="Mazzini L."/>
            <person name="Riva N."/>
            <person name="Mandrioli J."/>
            <person name="Caponnetto C."/>
            <person name="Battistini S."/>
            <person name="Volanti P."/>
            <person name="La Bella V."/>
            <person name="Conforti F.L."/>
            <person name="Borghero G."/>
            <person name="Messina S."/>
            <person name="Simone I.L."/>
            <person name="Trojsi F."/>
            <person name="Salvi F."/>
            <person name="Logullo F.O."/>
            <person name="D'Alfonso S."/>
            <person name="Corrado L."/>
            <person name="Capasso M."/>
            <person name="Ferrucci L."/>
            <person name="Moreno C.A.M."/>
            <person name="Kamalakaran S."/>
            <person name="Goldstein D.B."/>
            <person name="Gitler A.D."/>
            <person name="Harris T."/>
            <person name="Myers R.M."/>
            <person name="Phatnani H."/>
            <person name="Musunuri R.L."/>
            <person name="Evani U.S."/>
            <person name="Abhyankar A."/>
            <person name="Zody M.C."/>
            <person name="Kaye J."/>
            <person name="Finkbeiner S."/>
            <person name="Wyman S.K."/>
            <person name="LeNail A."/>
            <person name="Lima L."/>
            <person name="Fraenkel E."/>
            <person name="Svendsen C.N."/>
            <person name="Thompson L.M."/>
            <person name="Van Eyk J.E."/>
            <person name="Berry J.D."/>
            <person name="Miller T.M."/>
            <person name="Kolb S.J."/>
            <person name="Cudkowicz M."/>
            <person name="Baxi E."/>
            <person name="Benatar M."/>
            <person name="Taylor J.P."/>
            <person name="Rampersaud E."/>
            <person name="Wu G."/>
            <person name="Wuu J."/>
            <person name="Lauria G."/>
            <person name="Verde F."/>
            <person name="Fogh I."/>
            <person name="Tiloca C."/>
            <person name="Comi G.P."/>
            <person name="Soraru G."/>
            <person name="Cereda C."/>
            <person name="Corcia P."/>
            <person name="Laaksovirta H."/>
            <person name="Myllykangas L."/>
            <person name="Jansson L."/>
            <person name="Valori M."/>
            <person name="Ealing J."/>
            <person name="Hamdalla H."/>
            <person name="Rollinson S."/>
            <person name="Pickering-Brown S."/>
            <person name="Orrell R.W."/>
            <person name="Sidle K.C."/>
            <person name="Malaspina A."/>
            <person name="Hardy J."/>
            <person name="Singleton A.B."/>
            <person name="Johnson J.O."/>
            <person name="Arepalli S."/>
            <person name="Sapp P.C."/>
            <person name="McKenna-Yasek D."/>
            <person name="Polak M."/>
            <person name="Asress S."/>
            <person name="Al-Sarraj S."/>
            <person name="King A."/>
            <person name="Troakes C."/>
            <person name="Vance C."/>
            <person name="de Belleroche J."/>
            <person name="Baas F."/>
            <person name="Ten Asbroek A.L.M.A."/>
            <person name="Munoz-Blanco J.L."/>
            <person name="Hernandez D.G."/>
            <person name="Ding J."/>
            <person name="Gibbs J.R."/>
            <person name="Scholz S.W."/>
            <person name="Floeter M.K."/>
            <person name="Campbell R.H."/>
            <person name="Landi F."/>
            <person name="Bowser R."/>
            <person name="Pulst S.M."/>
            <person name="Ravits J.M."/>
            <person name="MacGowan D.J.L."/>
            <person name="Kirby J."/>
            <person name="Pioro E.P."/>
            <person name="Pamphlett R."/>
            <person name="Broach J."/>
            <person name="Gerhard G."/>
            <person name="Dunckley T.L."/>
            <person name="Brady C.B."/>
            <person name="Kowall N.W."/>
            <person name="Troncoso J.C."/>
            <person name="Le Ber I."/>
            <person name="Mouzat K."/>
            <person name="Lumbroso S."/>
            <person name="Heiman-Patterson T.D."/>
            <person name="Kamel F."/>
            <person name="Van Den Bosch L."/>
            <person name="Baloh R.H."/>
            <person name="Strom T.M."/>
            <person name="Meitinger T."/>
            <person name="Shatunov A."/>
            <person name="Van Eijk K.R."/>
            <person name="de Carvalho M."/>
            <person name="Kooyman M."/>
            <person name="Middelkoop B."/>
            <person name="Moisse M."/>
            <person name="McLaughlin R.L."/>
            <person name="Van Es M.A."/>
            <person name="Weber M."/>
            <person name="Boylan K.B."/>
            <person name="Van Blitterswijk M."/>
            <person name="Rademakers R."/>
            <person name="Morrison K.E."/>
            <person name="Basak A.N."/>
            <person name="Mora J.S."/>
            <person name="Drory V.E."/>
            <person name="Shaw P.J."/>
            <person name="Turner M.R."/>
            <person name="Talbot K."/>
            <person name="Hardiman O."/>
            <person name="Williams K.L."/>
            <person name="Fifita J.A."/>
            <person name="Nicholson G.A."/>
            <person name="Blair I.P."/>
            <person name="Rouleau G.A."/>
            <person name="Esteban-Perez J."/>
            <person name="Garcia-Redondo A."/>
            <person name="Al-Chalabi A."/>
            <person name="Rogaeva E."/>
            <person name="Zinman L."/>
            <person name="Ostrow L.W."/>
            <person name="Maragakis N.J."/>
            <person name="Rothstein J.D."/>
            <person name="Simmons Z."/>
            <person name="Cooper-Knock J."/>
            <person name="Brice A."/>
            <person name="Goutman S.A."/>
            <person name="Feldman E.L."/>
            <person name="Gibson S.B."/>
            <person name="Taroni F."/>
            <person name="Ratti A."/>
            <person name="Gellera C."/>
            <person name="Van Damme P."/>
            <person name="Robberecht W."/>
            <person name="Fratta P."/>
            <person name="Sabatelli M."/>
            <person name="Lunetta C."/>
            <person name="Ludolph A.C."/>
            <person name="Andersen P.M."/>
            <person name="Weishaupt J.H."/>
            <person name="Camu W."/>
            <person name="Trojanowski J.Q."/>
            <person name="Van Deerlin V.M."/>
            <person name="Brown R.H. Jr."/>
            <person name="van den Berg L.H."/>
            <person name="Veldink J.H."/>
            <person name="Harms M.B."/>
            <person name="Glass J.D."/>
            <person name="Stone D.J."/>
            <person name="Tienari P."/>
            <person name="Silani V."/>
            <person name="Chio A."/>
            <person name="Shaw C.E."/>
            <person name="Traynor B.J."/>
            <person name="Landers J.E."/>
        </authorList>
    </citation>
    <scope>INVOLVEMENT IN ALS25</scope>
    <scope>VARIANTS ALS25 544-ARG--SER-1032 DEL; LEU-986 AND GLY-1007</scope>
</reference>
<name>KIF5A_HUMAN</name>
<proteinExistence type="evidence at protein level"/>
<organism>
    <name type="scientific">Homo sapiens</name>
    <name type="common">Human</name>
    <dbReference type="NCBI Taxonomy" id="9606"/>
    <lineage>
        <taxon>Eukaryota</taxon>
        <taxon>Metazoa</taxon>
        <taxon>Chordata</taxon>
        <taxon>Craniata</taxon>
        <taxon>Vertebrata</taxon>
        <taxon>Euteleostomi</taxon>
        <taxon>Mammalia</taxon>
        <taxon>Eutheria</taxon>
        <taxon>Euarchontoglires</taxon>
        <taxon>Primates</taxon>
        <taxon>Haplorrhini</taxon>
        <taxon>Catarrhini</taxon>
        <taxon>Hominidae</taxon>
        <taxon>Homo</taxon>
    </lineage>
</organism>
<comment type="function">
    <text evidence="1 2">Microtubule-dependent motor required for slow axonal transport of neurofilament proteins (NFH, NFM and NFL). Can induce formation of neurite-like membrane protrusions in non-neuronal cells in a ZFYVE27-dependent manner. The ZFYVE27-KIF5A complex contributes to the vesicular transport of VAPA, VAPB, SURF4, RAB11A, RAB11B and RTN3 proteins in neurons. Required for anterograde axonal transportation of MAPK8IP3/JIP3 which is essential for MAPK8IP3/JIP3 function in axon elongation.</text>
</comment>
<comment type="catalytic activity">
    <reaction evidence="23">
        <text>ATP + H2O + a kinesin associated with a microtubule at position (n) = ADP + phosphate a kinesin associated with a microtubule at position (n+1, toward the plus end).</text>
        <dbReference type="EC" id="5.6.1.3"/>
    </reaction>
</comment>
<comment type="subunit">
    <text evidence="1 12 15">Oligomer composed of two heavy chains and two light chains. Interacts with GRIP1. Interacts with FMR1 (via C-terminus); this interaction is increased in a mGluR-dependent manner. Interacts with ZFYVE27. Interacts with VAPA, VAPB, SURF4, RAB11A (GDP-bound form), RAB11B (GDP-bound form) and RTN3 in a ZFYVE27-dependent manner (By similarity). Interacts with BORCS5 (PubMed:25898167). Interacts with BICD2 (PubMed:20386726). Interacts with DTNB (By similarity).</text>
</comment>
<comment type="interaction">
    <interactant intactId="EBI-713468">
        <id>Q12840</id>
    </interactant>
    <interactant intactId="EBI-6125599">
        <id>Q96NW4</id>
        <label>ANKRD27</label>
    </interactant>
    <organismsDiffer>false</organismsDiffer>
    <experiments>4</experiments>
</comment>
<comment type="interaction">
    <interactant intactId="EBI-713468">
        <id>Q12840</id>
    </interactant>
    <interactant intactId="EBI-1105048">
        <id>Q9UPV9</id>
        <label>TRAK1</label>
    </interactant>
    <organismsDiffer>false</organismsDiffer>
    <experiments>3</experiments>
</comment>
<comment type="interaction">
    <interactant intactId="EBI-713468">
        <id>Q12840</id>
    </interactant>
    <interactant intactId="EBI-1396483">
        <id>Q8R2H7</id>
        <label>Trak2</label>
    </interactant>
    <organismsDiffer>true</organismsDiffer>
    <experiments>2</experiments>
</comment>
<comment type="subcellular location">
    <subcellularLocation>
        <location evidence="2">Cytoplasm</location>
        <location evidence="2">Perinuclear region</location>
    </subcellularLocation>
    <subcellularLocation>
        <location evidence="2">Cytoplasm</location>
        <location evidence="2">Cytoskeleton</location>
    </subcellularLocation>
    <subcellularLocation>
        <location evidence="2">Perikaryon</location>
    </subcellularLocation>
    <text evidence="2">Concentrated in the cell body of the neurons, particularly in the perinuclear region.</text>
</comment>
<comment type="tissue specificity">
    <text evidence="20">Distributed throughout the CNS but is highly enriched in subsets of neurons.</text>
</comment>
<comment type="domain">
    <text>Composed of three structural domains: a large globular N-terminal domain which is responsible for the motor activity of kinesin (it hydrolyzes ATP and binds microtubule), a central alpha-helical coiled coil domain that mediates the heavy chain dimerization; and a small globular C-terminal domain which interacts with other proteins (such as the kinesin light chains), vesicles and membranous organelles.</text>
</comment>
<comment type="disease" evidence="5 6 7 8 9 10 11 13">
    <disease id="DI-02319">
        <name>Spastic paraplegia 10, autosomal dominant</name>
        <acronym>SPG10</acronym>
        <description>A form of spastic paraplegia, a neurodegenerative disorder characterized by a slow, gradual, progressive weakness and spasticity of the lower limbs. Rate of progression and the severity of symptoms are quite variable. Initial symptoms may include difficulty with balance, weakness and stiffness in the legs, muscle spasms, and dragging the toes when walking. In some forms of the disorder, bladder symptoms (such as incontinence) may appear, or the weakness and stiffness may spread to other parts of the body.</description>
        <dbReference type="MIM" id="604187"/>
    </disease>
    <text>The disease is caused by variants affecting the gene represented in this entry.</text>
</comment>
<comment type="disease" evidence="14 16 17">
    <disease id="DI-04913">
        <name>Myoclonus, intractable, neonatal</name>
        <acronym>NEIMY</acronym>
        <description>An autosomal dominant neurologic disorder characterized by severe, infantile-onset myoclonic seizures, hypotonia, optic nerve abnormalities, dysphagia, apnea, and early developmental arrest. Brain imaging shows a progressive leukoencephalopathy. Some patients may die in infancy.</description>
        <dbReference type="MIM" id="617235"/>
    </disease>
    <text>The disease is caused by variants affecting the gene represented in this entry.</text>
</comment>
<comment type="disease" evidence="18 19">
    <disease id="DI-05205">
        <name>Amyotrophic lateral sclerosis 25</name>
        <acronym>ALS25</acronym>
        <description>A form of amyotrophic lateral sclerosis, a neurodegenerative disorder affecting upper motor neurons in the brain and lower motor neurons in the brain stem and spinal cord, resulting in fatal paralysis. Sensory abnormalities are absent. The pathologic hallmarks of the disease include pallor of the corticospinal tract due to loss of motor neurons, presence of ubiquitin-positive inclusions within surviving motor neurons, and deposition of pathologic aggregates. The etiology of amyotrophic lateral sclerosis is likely to be multifactorial, involving both genetic and environmental factors. The disease is inherited in 5-10% of the cases. ALS25 is an autosomal dominant form with variable adult onset and incomplete penetrance.</description>
        <dbReference type="MIM" id="617921"/>
    </disease>
    <text evidence="18">Disease susceptibility is associated with variants affecting the gene represented in this entry. The mutation NM_004984.2:c.33019A&gt;G encoding the predicted missence variant p.Arg1007Gly, may also affect splicing and induce the skipping of exon 27, resulting in a frameshift and a premature stop codon producing a truncated protein p.Asn999Valfs*39.</text>
</comment>
<comment type="similarity">
    <text evidence="3">Belongs to the TRAFAC class myosin-kinesin ATPase superfamily. Kinesin family. Kinesin subfamily.</text>
</comment>
<comment type="sequence caution" evidence="22">
    <conflict type="erroneous initiation">
        <sequence resource="EMBL-CDS" id="BAE06127"/>
    </conflict>
    <text>Extended N-terminus.</text>
</comment>
<evidence type="ECO:0000250" key="1">
    <source>
        <dbReference type="UniProtKB" id="P33175"/>
    </source>
</evidence>
<evidence type="ECO:0000250" key="2">
    <source>
        <dbReference type="UniProtKB" id="Q6QLM7"/>
    </source>
</evidence>
<evidence type="ECO:0000255" key="3">
    <source>
        <dbReference type="PROSITE-ProRule" id="PRU00283"/>
    </source>
</evidence>
<evidence type="ECO:0000256" key="4">
    <source>
        <dbReference type="SAM" id="MobiDB-lite"/>
    </source>
</evidence>
<evidence type="ECO:0000269" key="5">
    <source>
    </source>
</evidence>
<evidence type="ECO:0000269" key="6">
    <source>
    </source>
</evidence>
<evidence type="ECO:0000269" key="7">
    <source>
    </source>
</evidence>
<evidence type="ECO:0000269" key="8">
    <source>
    </source>
</evidence>
<evidence type="ECO:0000269" key="9">
    <source>
    </source>
</evidence>
<evidence type="ECO:0000269" key="10">
    <source>
    </source>
</evidence>
<evidence type="ECO:0000269" key="11">
    <source>
    </source>
</evidence>
<evidence type="ECO:0000269" key="12">
    <source>
    </source>
</evidence>
<evidence type="ECO:0000269" key="13">
    <source>
    </source>
</evidence>
<evidence type="ECO:0000269" key="14">
    <source>
    </source>
</evidence>
<evidence type="ECO:0000269" key="15">
    <source>
    </source>
</evidence>
<evidence type="ECO:0000269" key="16">
    <source>
    </source>
</evidence>
<evidence type="ECO:0000269" key="17">
    <source>
    </source>
</evidence>
<evidence type="ECO:0000269" key="18">
    <source>
    </source>
</evidence>
<evidence type="ECO:0000269" key="19">
    <source>
    </source>
</evidence>
<evidence type="ECO:0000269" key="20">
    <source>
    </source>
</evidence>
<evidence type="ECO:0000303" key="21">
    <source>
    </source>
</evidence>
<evidence type="ECO:0000305" key="22"/>
<evidence type="ECO:0000305" key="23">
    <source>
    </source>
</evidence>
<evidence type="ECO:0000312" key="24">
    <source>
        <dbReference type="HGNC" id="HGNC:6323"/>
    </source>
</evidence>
<evidence type="ECO:0007744" key="25">
    <source>
    </source>
</evidence>
<sequence>MAETNNECSIKVLCRFRPLNQAEILRGDKFIPIFQGDDSVVIGGKPYVFDRVFPPNTTQEQVYHACAMQIVKDVLAGYNGTIFAYGQTSSGKTHTMEGKLHDPQLMGIIPRIARDIFNHIYSMDENLEFHIKVSYFEIYLDKIRDLLDVTKTNLSVHEDKNRVPFVKGCTERFVSSPEEILDVIDEGKSNRHVAVTNMNEHSSRSHSIFLINIKQENMETEQKLSGKLYLVDLAGSEKVSKTGAEGAVLDEAKNINKSLSALGNVISALAEGTKSYVPYRDSKMTRILQDSLGGNCRTTMFICCSPSSYNDAETKSTLMFGQRAKTIKNTASVNLELTAEQWKKKYEKEKEKTKAQKETIAKLEAELSRWRNGENVPETERLAGEEAALGAELCEETPVNDNSSIVVRIAPEERQKYEEEIRRLYKQLDDKDDEINQQSQLIEKLKQQMLDQEELLVSTRGDNEKVQRELSHLQSENDAAKDEVKEVLQALEELAVNYDQKSQEVEEKSQQNQLLVDELSQKVATMLSLESELQRLQEVSGHQRKRIAEVLNGLMKDLSEFSVIVGNGEIKLPVEISGAIEEEFTVARLYISKIKSEVKSVVKRCRQLENLQVECHRKMEVTGRELSSCQLLISQHEAKIRSLTEYMQSVELKKRHLEESYDSLSDELAKLQAQETVHEVALKDKEPDTQDADEVKKALELQMESHREAHHRQLARLRDEINEKQKTIDELKDLNQKLQLELEKLQADYEKLKSEEHEKSTKLQELTFLYERHEQSKQDLKGLEETVARELQTLHNLRKLFVQDVTTRVKKSAEMEPEDSGGIHSQKQKISFLENNLEQLTKVHKQLVRDNADLRCELPKLEKRLRATAERVKALEGALKEAKEGAMKDKRRYQQEVDRIKEAVRYKSSGKRGHSAQIAKPVRPGHYPASSPTNPYGTRSPECISYTNSLFQNYQNLYLQATPSSTSDMYFANSCTSSGATSSGGPLASYQKANMDNGNATDINDNRSDLPCGYEAEDQAKLFPLHQETAAS</sequence>
<protein>
    <recommendedName>
        <fullName>Kinesin heavy chain isoform 5A</fullName>
        <ecNumber evidence="23">5.6.1.3</ecNumber>
    </recommendedName>
    <alternativeName>
        <fullName>Kinesin heavy chain neuron-specific 1</fullName>
    </alternativeName>
    <alternativeName>
        <fullName evidence="21">Neuronal kinesin heavy chain</fullName>
        <shortName evidence="21">NKHC</shortName>
    </alternativeName>
</protein>
<accession>Q12840</accession>
<accession>A6H8M5</accession>
<accession>Q4LE26</accession>